<protein>
    <recommendedName>
        <fullName evidence="2">Small ribosomal subunit protein eS4</fullName>
    </recommendedName>
    <alternativeName>
        <fullName>40S ribosomal protein S4, X isoform</fullName>
    </alternativeName>
</protein>
<evidence type="ECO:0000250" key="1">
    <source>
        <dbReference type="UniProtKB" id="P62701"/>
    </source>
</evidence>
<evidence type="ECO:0000305" key="2"/>
<keyword id="KW-0002">3D-structure</keyword>
<keyword id="KW-0963">Cytoplasm</keyword>
<keyword id="KW-0539">Nucleus</keyword>
<keyword id="KW-1185">Reference proteome</keyword>
<keyword id="KW-0687">Ribonucleoprotein</keyword>
<keyword id="KW-0689">Ribosomal protein</keyword>
<keyword id="KW-0694">RNA-binding</keyword>
<keyword id="KW-0699">rRNA-binding</keyword>
<comment type="function">
    <text evidence="1">Component of the small ribosomal subunit. The ribosome is a large ribonucleoprotein complex responsible for the synthesis of proteins in the cell. Part of the small subunit (SSU) processome, first precursor of the small eukaryotic ribosomal subunit. During the assembly of the SSU processome in the nucleolus, many ribosome biogenesis factors, an RNA chaperone and ribosomal proteins associate with the nascent pre-rRNA and work in concert to generate RNA folding, modifications, rearrangements and cleavage as well as targeted degradation of pre-ribosomal RNA by the RNA exosome.</text>
</comment>
<comment type="subunit">
    <text evidence="1">Component of the small ribosomal subunit. Part of the small subunit (SSU) processome, composed of more than 70 proteins and the RNA chaperone small nucleolar RNA (snoRNA) U3.</text>
</comment>
<comment type="subcellular location">
    <subcellularLocation>
        <location evidence="1">Cytoplasm</location>
    </subcellularLocation>
    <subcellularLocation>
        <location evidence="1">Nucleus</location>
        <location evidence="1">Nucleolus</location>
    </subcellularLocation>
    <text evidence="1">Localized in cytoplasmic mRNP granules containing untranslated mRNAs.</text>
</comment>
<comment type="similarity">
    <text evidence="2">Belongs to the eukaryotic ribosomal protein eS4 family.</text>
</comment>
<proteinExistence type="evidence at protein level"/>
<feature type="initiator methionine" description="Removed" evidence="1">
    <location>
        <position position="1"/>
    </location>
</feature>
<feature type="chain" id="PRO_0000130824" description="Small ribosomal subunit protein eS4">
    <location>
        <begin position="2"/>
        <end position="263"/>
    </location>
</feature>
<feature type="domain" description="S4 RNA-binding">
    <location>
        <begin position="42"/>
        <end position="105"/>
    </location>
</feature>
<accession>Q642H9</accession>
<organism>
    <name type="scientific">Danio rerio</name>
    <name type="common">Zebrafish</name>
    <name type="synonym">Brachydanio rerio</name>
    <dbReference type="NCBI Taxonomy" id="7955"/>
    <lineage>
        <taxon>Eukaryota</taxon>
        <taxon>Metazoa</taxon>
        <taxon>Chordata</taxon>
        <taxon>Craniata</taxon>
        <taxon>Vertebrata</taxon>
        <taxon>Euteleostomi</taxon>
        <taxon>Actinopterygii</taxon>
        <taxon>Neopterygii</taxon>
        <taxon>Teleostei</taxon>
        <taxon>Ostariophysi</taxon>
        <taxon>Cypriniformes</taxon>
        <taxon>Danionidae</taxon>
        <taxon>Danioninae</taxon>
        <taxon>Danio</taxon>
    </lineage>
</organism>
<sequence>MARGPKKHLKRVAAPKHWMLDKLTGVFAPRPSTGPHKLRECLPLIIFLRNRLKYALTGDEVKKICMQRFIKIDGKVRTDITYPTGFMDVVSIEKTGENFRLIYDVKGRFTVHRITNEEAKYKLCKVRKILIGTKGIPHLVTHDARTIRYPDPLIKVNDTIRIDLDTGKITDFIKFETGNMCMVTGGANLGRIGVITNREKHPGSFDVVHVKDSIGNSFATRLSNIFVIGKGNKPWVSLPRGKGVRLTIAEERDKRLAAKQSSS</sequence>
<dbReference type="EMBL" id="BC081584">
    <property type="protein sequence ID" value="AAH81584.1"/>
    <property type="molecule type" value="mRNA"/>
</dbReference>
<dbReference type="RefSeq" id="NP_001005589.1">
    <property type="nucleotide sequence ID" value="NM_001005589.1"/>
</dbReference>
<dbReference type="PDB" id="7OYA">
    <property type="method" value="EM"/>
    <property type="resolution" value="3.20 A"/>
    <property type="chains" value="E2=1-263"/>
</dbReference>
<dbReference type="PDB" id="7OYB">
    <property type="method" value="EM"/>
    <property type="resolution" value="2.40 A"/>
    <property type="chains" value="E2=1-263"/>
</dbReference>
<dbReference type="PDBsum" id="7OYA"/>
<dbReference type="PDBsum" id="7OYB"/>
<dbReference type="EMDB" id="EMD-13111"/>
<dbReference type="EMDB" id="EMD-13112"/>
<dbReference type="SMR" id="Q642H9"/>
<dbReference type="FunCoup" id="Q642H9">
    <property type="interactions" value="2369"/>
</dbReference>
<dbReference type="STRING" id="7955.ENSDARP00000108089"/>
<dbReference type="PaxDb" id="7955-ENSDARP00000108089"/>
<dbReference type="Ensembl" id="ENSDART00000128917">
    <property type="protein sequence ID" value="ENSDARP00000108089"/>
    <property type="gene ID" value="ENSDARG00000014690"/>
</dbReference>
<dbReference type="GeneID" id="449547"/>
<dbReference type="KEGG" id="dre:449547"/>
<dbReference type="AGR" id="ZFIN:ZDB-GENE-040927-19"/>
<dbReference type="CTD" id="6191"/>
<dbReference type="ZFIN" id="ZDB-GENE-040927-19">
    <property type="gene designation" value="rps4x"/>
</dbReference>
<dbReference type="eggNOG" id="KOG0378">
    <property type="taxonomic scope" value="Eukaryota"/>
</dbReference>
<dbReference type="HOGENOM" id="CLU_060400_1_0_1"/>
<dbReference type="InParanoid" id="Q642H9"/>
<dbReference type="OMA" id="GHIQLNL"/>
<dbReference type="OrthoDB" id="1109245at2759"/>
<dbReference type="PhylomeDB" id="Q642H9"/>
<dbReference type="TreeFam" id="TF300612"/>
<dbReference type="Reactome" id="R-DRE-156827">
    <property type="pathway name" value="L13a-mediated translational silencing of Ceruloplasmin expression"/>
</dbReference>
<dbReference type="Reactome" id="R-DRE-1799339">
    <property type="pathway name" value="SRP-dependent cotranslational protein targeting to membrane"/>
</dbReference>
<dbReference type="Reactome" id="R-DRE-72689">
    <property type="pathway name" value="Formation of a pool of free 40S subunits"/>
</dbReference>
<dbReference type="Reactome" id="R-DRE-72695">
    <property type="pathway name" value="Formation of the ternary complex, and subsequently, the 43S complex"/>
</dbReference>
<dbReference type="Reactome" id="R-DRE-72702">
    <property type="pathway name" value="Ribosomal scanning and start codon recognition"/>
</dbReference>
<dbReference type="Reactome" id="R-DRE-975956">
    <property type="pathway name" value="Nonsense Mediated Decay (NMD) independent of the Exon Junction Complex (EJC)"/>
</dbReference>
<dbReference type="Reactome" id="R-DRE-975957">
    <property type="pathway name" value="Nonsense Mediated Decay (NMD) enhanced by the Exon Junction Complex (EJC)"/>
</dbReference>
<dbReference type="PRO" id="PR:Q642H9"/>
<dbReference type="Proteomes" id="UP000000437">
    <property type="component" value="Chromosome 7"/>
</dbReference>
<dbReference type="Bgee" id="ENSDARG00000014690">
    <property type="expression patterns" value="Expressed in tail bud paraxial mesoderm and 28 other cell types or tissues"/>
</dbReference>
<dbReference type="GO" id="GO:0022627">
    <property type="term" value="C:cytosolic small ribosomal subunit"/>
    <property type="evidence" value="ECO:0000318"/>
    <property type="project" value="GO_Central"/>
</dbReference>
<dbReference type="GO" id="GO:0005730">
    <property type="term" value="C:nucleolus"/>
    <property type="evidence" value="ECO:0007669"/>
    <property type="project" value="UniProtKB-SubCell"/>
</dbReference>
<dbReference type="GO" id="GO:0032040">
    <property type="term" value="C:small-subunit processome"/>
    <property type="evidence" value="ECO:0000250"/>
    <property type="project" value="UniProtKB"/>
</dbReference>
<dbReference type="GO" id="GO:0003723">
    <property type="term" value="F:RNA binding"/>
    <property type="evidence" value="ECO:0000318"/>
    <property type="project" value="GO_Central"/>
</dbReference>
<dbReference type="GO" id="GO:0019843">
    <property type="term" value="F:rRNA binding"/>
    <property type="evidence" value="ECO:0007669"/>
    <property type="project" value="UniProtKB-KW"/>
</dbReference>
<dbReference type="GO" id="GO:0003735">
    <property type="term" value="F:structural constituent of ribosome"/>
    <property type="evidence" value="ECO:0000318"/>
    <property type="project" value="GO_Central"/>
</dbReference>
<dbReference type="GO" id="GO:0007420">
    <property type="term" value="P:brain development"/>
    <property type="evidence" value="ECO:0000315"/>
    <property type="project" value="ZFIN"/>
</dbReference>
<dbReference type="GO" id="GO:0043009">
    <property type="term" value="P:chordate embryonic development"/>
    <property type="evidence" value="ECO:0000315"/>
    <property type="project" value="ZFIN"/>
</dbReference>
<dbReference type="GO" id="GO:0042274">
    <property type="term" value="P:ribosomal small subunit biogenesis"/>
    <property type="evidence" value="ECO:0000250"/>
    <property type="project" value="UniProtKB"/>
</dbReference>
<dbReference type="GO" id="GO:0006412">
    <property type="term" value="P:translation"/>
    <property type="evidence" value="ECO:0000318"/>
    <property type="project" value="GO_Central"/>
</dbReference>
<dbReference type="CDD" id="cd06087">
    <property type="entry name" value="KOW_RPS4"/>
    <property type="match status" value="1"/>
</dbReference>
<dbReference type="FunFam" id="2.30.30.30:FF:000005">
    <property type="entry name" value="40S ribosomal protein S4"/>
    <property type="match status" value="1"/>
</dbReference>
<dbReference type="FunFam" id="2.40.50.740:FF:000001">
    <property type="entry name" value="40S ribosomal protein S4"/>
    <property type="match status" value="1"/>
</dbReference>
<dbReference type="FunFam" id="3.10.290.10:FF:000051">
    <property type="entry name" value="40S ribosomal protein S4, X isoform"/>
    <property type="match status" value="1"/>
</dbReference>
<dbReference type="Gene3D" id="2.30.30.30">
    <property type="match status" value="1"/>
</dbReference>
<dbReference type="Gene3D" id="2.40.50.740">
    <property type="match status" value="1"/>
</dbReference>
<dbReference type="Gene3D" id="3.10.290.10">
    <property type="entry name" value="RNA-binding S4 domain"/>
    <property type="match status" value="1"/>
</dbReference>
<dbReference type="HAMAP" id="MF_00485">
    <property type="entry name" value="Ribosomal_eS4"/>
    <property type="match status" value="1"/>
</dbReference>
<dbReference type="InterPro" id="IPR005824">
    <property type="entry name" value="KOW"/>
</dbReference>
<dbReference type="InterPro" id="IPR014722">
    <property type="entry name" value="Rib_uL2_dom2"/>
</dbReference>
<dbReference type="InterPro" id="IPR000876">
    <property type="entry name" value="Ribosomal_eS4"/>
</dbReference>
<dbReference type="InterPro" id="IPR032277">
    <property type="entry name" value="Ribosomal_eS4_C"/>
</dbReference>
<dbReference type="InterPro" id="IPR013845">
    <property type="entry name" value="Ribosomal_eS4_central_region"/>
</dbReference>
<dbReference type="InterPro" id="IPR038237">
    <property type="entry name" value="Ribosomal_eS4_central_sf"/>
</dbReference>
<dbReference type="InterPro" id="IPR041982">
    <property type="entry name" value="Ribosomal_eS4_KOW"/>
</dbReference>
<dbReference type="InterPro" id="IPR013843">
    <property type="entry name" value="Ribosomal_eS4_N"/>
</dbReference>
<dbReference type="InterPro" id="IPR018199">
    <property type="entry name" value="Ribosomal_eS4_N_CS"/>
</dbReference>
<dbReference type="InterPro" id="IPR002942">
    <property type="entry name" value="S4_RNA-bd"/>
</dbReference>
<dbReference type="InterPro" id="IPR036986">
    <property type="entry name" value="S4_RNA-bd_sf"/>
</dbReference>
<dbReference type="PANTHER" id="PTHR11581">
    <property type="entry name" value="30S/40S RIBOSOMAL PROTEIN S4"/>
    <property type="match status" value="1"/>
</dbReference>
<dbReference type="PANTHER" id="PTHR11581:SF0">
    <property type="entry name" value="SMALL RIBOSOMAL SUBUNIT PROTEIN ES4"/>
    <property type="match status" value="1"/>
</dbReference>
<dbReference type="Pfam" id="PF16121">
    <property type="entry name" value="40S_S4_C"/>
    <property type="match status" value="1"/>
</dbReference>
<dbReference type="Pfam" id="PF00467">
    <property type="entry name" value="KOW"/>
    <property type="match status" value="1"/>
</dbReference>
<dbReference type="Pfam" id="PF00900">
    <property type="entry name" value="Ribosomal_S4e"/>
    <property type="match status" value="1"/>
</dbReference>
<dbReference type="Pfam" id="PF08071">
    <property type="entry name" value="RS4NT"/>
    <property type="match status" value="1"/>
</dbReference>
<dbReference type="PIRSF" id="PIRSF002116">
    <property type="entry name" value="Ribosomal_S4"/>
    <property type="match status" value="1"/>
</dbReference>
<dbReference type="SMART" id="SM00363">
    <property type="entry name" value="S4"/>
    <property type="match status" value="1"/>
</dbReference>
<dbReference type="PROSITE" id="PS00528">
    <property type="entry name" value="RIBOSOMAL_S4E"/>
    <property type="match status" value="1"/>
</dbReference>
<dbReference type="PROSITE" id="PS50889">
    <property type="entry name" value="S4"/>
    <property type="match status" value="1"/>
</dbReference>
<reference key="1">
    <citation type="submission" date="2004-09" db="EMBL/GenBank/DDBJ databases">
        <authorList>
            <consortium name="NIH - Zebrafish Gene Collection (ZGC) project"/>
        </authorList>
    </citation>
    <scope>NUCLEOTIDE SEQUENCE [LARGE SCALE MRNA]</scope>
</reference>
<name>RS4X_DANRE</name>
<gene>
    <name type="primary">rps4x</name>
    <name type="synonym">rps4</name>
    <name type="ORF">zgc:92076</name>
</gene>